<reference key="1">
    <citation type="journal article" date="2005" name="Genome Biol.">
        <title>Full-length cDNAs from chicken bursal lymphocytes to facilitate gene function analysis.</title>
        <authorList>
            <person name="Caldwell R.B."/>
            <person name="Kierzek A.M."/>
            <person name="Arakawa H."/>
            <person name="Bezzubov Y."/>
            <person name="Zaim J."/>
            <person name="Fiedler P."/>
            <person name="Kutter S."/>
            <person name="Blagodatski A."/>
            <person name="Kostovska D."/>
            <person name="Koter M."/>
            <person name="Plachy J."/>
            <person name="Carninci P."/>
            <person name="Hayashizaki Y."/>
            <person name="Buerstedde J.-M."/>
        </authorList>
    </citation>
    <scope>NUCLEOTIDE SEQUENCE [LARGE SCALE MRNA]</scope>
    <source>
        <strain>CB</strain>
        <tissue>Bursa of Fabricius</tissue>
    </source>
</reference>
<name>NHLC2_CHICK</name>
<dbReference type="EMBL" id="AJ720917">
    <property type="protein sequence ID" value="CAG32576.1"/>
    <property type="molecule type" value="mRNA"/>
</dbReference>
<dbReference type="RefSeq" id="NP_001006504.1">
    <property type="nucleotide sequence ID" value="NM_001006504.1"/>
</dbReference>
<dbReference type="SMR" id="Q5ZI67"/>
<dbReference type="FunCoup" id="Q5ZI67">
    <property type="interactions" value="2019"/>
</dbReference>
<dbReference type="STRING" id="9031.ENSGALP00000014530"/>
<dbReference type="PaxDb" id="9031-ENSGALP00000014530"/>
<dbReference type="GeneID" id="423903"/>
<dbReference type="KEGG" id="gga:423903"/>
<dbReference type="CTD" id="374354"/>
<dbReference type="VEuPathDB" id="HostDB:geneid_423903"/>
<dbReference type="eggNOG" id="KOG2177">
    <property type="taxonomic scope" value="Eukaryota"/>
</dbReference>
<dbReference type="InParanoid" id="Q5ZI67"/>
<dbReference type="OrthoDB" id="273823at2759"/>
<dbReference type="PhylomeDB" id="Q5ZI67"/>
<dbReference type="PRO" id="PR:Q5ZI67"/>
<dbReference type="Proteomes" id="UP000000539">
    <property type="component" value="Unassembled WGS sequence"/>
</dbReference>
<dbReference type="GO" id="GO:0005829">
    <property type="term" value="C:cytosol"/>
    <property type="evidence" value="ECO:0000250"/>
    <property type="project" value="UniProtKB"/>
</dbReference>
<dbReference type="CDD" id="cd14951">
    <property type="entry name" value="NHL-2_like"/>
    <property type="match status" value="1"/>
</dbReference>
<dbReference type="CDD" id="cd03012">
    <property type="entry name" value="TlpA_like_DipZ_like"/>
    <property type="match status" value="1"/>
</dbReference>
<dbReference type="FunFam" id="2.120.10.30:FF:000063">
    <property type="entry name" value="NHL repeat containing 2"/>
    <property type="match status" value="1"/>
</dbReference>
<dbReference type="FunFam" id="2.120.10.30:FF:000068">
    <property type="entry name" value="NHL repeat-containing protein 2"/>
    <property type="match status" value="1"/>
</dbReference>
<dbReference type="FunFam" id="3.40.30.10:FF:000108">
    <property type="entry name" value="NHL repeat-containing protein 2"/>
    <property type="match status" value="1"/>
</dbReference>
<dbReference type="Gene3D" id="3.40.30.10">
    <property type="entry name" value="Glutaredoxin"/>
    <property type="match status" value="1"/>
</dbReference>
<dbReference type="Gene3D" id="2.120.10.30">
    <property type="entry name" value="TolB, C-terminal domain"/>
    <property type="match status" value="3"/>
</dbReference>
<dbReference type="InterPro" id="IPR011042">
    <property type="entry name" value="6-blade_b-propeller_TolB-like"/>
</dbReference>
<dbReference type="InterPro" id="IPR045302">
    <property type="entry name" value="NHL2_NHL_rpt_dom"/>
</dbReference>
<dbReference type="InterPro" id="IPR001258">
    <property type="entry name" value="NHL_repeat"/>
</dbReference>
<dbReference type="InterPro" id="IPR012336">
    <property type="entry name" value="Thioredoxin-like_fold"/>
</dbReference>
<dbReference type="InterPro" id="IPR036249">
    <property type="entry name" value="Thioredoxin-like_sf"/>
</dbReference>
<dbReference type="InterPro" id="IPR013766">
    <property type="entry name" value="Thioredoxin_domain"/>
</dbReference>
<dbReference type="PANTHER" id="PTHR46388">
    <property type="entry name" value="NHL REPEAT-CONTAINING PROTEIN 2"/>
    <property type="match status" value="1"/>
</dbReference>
<dbReference type="PANTHER" id="PTHR46388:SF2">
    <property type="entry name" value="NHL REPEAT-CONTAINING PROTEIN 2"/>
    <property type="match status" value="1"/>
</dbReference>
<dbReference type="Pfam" id="PF01436">
    <property type="entry name" value="NHL"/>
    <property type="match status" value="3"/>
</dbReference>
<dbReference type="Pfam" id="PF13905">
    <property type="entry name" value="Thioredoxin_8"/>
    <property type="match status" value="1"/>
</dbReference>
<dbReference type="SUPFAM" id="SSF101898">
    <property type="entry name" value="NHL repeat"/>
    <property type="match status" value="1"/>
</dbReference>
<dbReference type="SUPFAM" id="SSF52833">
    <property type="entry name" value="Thioredoxin-like"/>
    <property type="match status" value="1"/>
</dbReference>
<dbReference type="PROSITE" id="PS51125">
    <property type="entry name" value="NHL"/>
    <property type="match status" value="4"/>
</dbReference>
<dbReference type="PROSITE" id="PS51352">
    <property type="entry name" value="THIOREDOXIN_2"/>
    <property type="match status" value="1"/>
</dbReference>
<feature type="chain" id="PRO_0000313810" description="NHL repeat-containing protein 2">
    <location>
        <begin position="1"/>
        <end position="727"/>
    </location>
</feature>
<feature type="domain" description="Thioredoxin" evidence="3">
    <location>
        <begin position="43"/>
        <end position="198"/>
    </location>
</feature>
<feature type="repeat" description="NHL 1">
    <location>
        <begin position="207"/>
        <end position="249"/>
    </location>
</feature>
<feature type="repeat" description="NHL 2">
    <location>
        <begin position="260"/>
        <end position="302"/>
    </location>
</feature>
<feature type="repeat" description="NHL 3">
    <location>
        <begin position="330"/>
        <end position="364"/>
    </location>
</feature>
<feature type="repeat" description="NHL 4">
    <location>
        <begin position="404"/>
        <end position="434"/>
    </location>
</feature>
<feature type="repeat" description="NHL 5">
    <location>
        <begin position="456"/>
        <end position="500"/>
    </location>
</feature>
<feature type="repeat" description="NHL 6">
    <location>
        <begin position="513"/>
        <end position="557"/>
    </location>
</feature>
<proteinExistence type="evidence at transcript level"/>
<accession>Q5ZI67</accession>
<organism>
    <name type="scientific">Gallus gallus</name>
    <name type="common">Chicken</name>
    <dbReference type="NCBI Taxonomy" id="9031"/>
    <lineage>
        <taxon>Eukaryota</taxon>
        <taxon>Metazoa</taxon>
        <taxon>Chordata</taxon>
        <taxon>Craniata</taxon>
        <taxon>Vertebrata</taxon>
        <taxon>Euteleostomi</taxon>
        <taxon>Archelosauria</taxon>
        <taxon>Archosauria</taxon>
        <taxon>Dinosauria</taxon>
        <taxon>Saurischia</taxon>
        <taxon>Theropoda</taxon>
        <taxon>Coelurosauria</taxon>
        <taxon>Aves</taxon>
        <taxon>Neognathae</taxon>
        <taxon>Galloanserae</taxon>
        <taxon>Galliformes</taxon>
        <taxon>Phasianidae</taxon>
        <taxon>Phasianinae</taxon>
        <taxon>Gallus</taxon>
    </lineage>
</organism>
<keyword id="KW-0963">Cytoplasm</keyword>
<keyword id="KW-1185">Reference proteome</keyword>
<keyword id="KW-0677">Repeat</keyword>
<sequence length="727" mass="79607">MAAEGLAGLLPAQTQLEYALLDADTPQEKENLVYQYLKKMDSRERDLTVPELSRDLQWLNTEGPISLHKDLCGKVVVLDFFTYCCINCLHLLPDLHELEHQYSDKDGLVIIGVHSAKFPNEKVLDSIKSAVLRYNIVHPVVNDADATLWHELEVSCWPTLVILGPRGNMLFSLVGEGHKEKLFLFTSITLKFYKERGQIKDNSIGIKLYKDSLPPSPLLFPGKVTVDKSGERLVIADTGHHRILVTLKNGQILHTIGGPNSGRKDGRFSEAAFNSPQGVAIKNNVIYVADTENHLIRKIDLELEIVTTVAGIGIQGVDKEGGAKGEEQPISSPWDVVFGNSVSGTQEDDVLWIAMAGIHQVWALMLEGGKLPKGSDLKKGVCLRFAGSGNEENRNNAYPHKAGFAQPSGLSLASEEPWNCLFVADSESSTVRMISLKDGAVKHLVGGERDPLNLFAFGDVDGAGINAKLQHPLGITWDKKRKLLYVADSYNHKIKVVDPKMKNCATLAGTGEASNVVGSSFTQSTFNEPGGLCIEENGRLVYVADTNNHQIKVLDLETKILSMLPILNPETCDVTDNLSVQKDQIANLPKLPKSAPNIQLPSLSAAPGQTIQFLLKLTLPPDSKLNEEAPNAWFITAEDNNTWLLQGQCLSGEIKDVSCQTVIPFQLPRVCLSAEAVLAIKACLYYCSKDSSACMMKGISFNQPLQIGSTNQGRLTQVELTHSFITN</sequence>
<gene>
    <name type="primary">NHLRC2</name>
    <name type="ORF">RCJMB04_29n5</name>
</gene>
<evidence type="ECO:0000250" key="1">
    <source>
        <dbReference type="UniProtKB" id="Q8BZW8"/>
    </source>
</evidence>
<evidence type="ECO:0000250" key="2">
    <source>
        <dbReference type="UniProtKB" id="Q8NBF2"/>
    </source>
</evidence>
<evidence type="ECO:0000255" key="3">
    <source>
        <dbReference type="PROSITE-ProRule" id="PRU00691"/>
    </source>
</evidence>
<comment type="function">
    <text evidence="1">Required for normal embryonic development.</text>
</comment>
<comment type="subunit">
    <text evidence="2">Monomer.</text>
</comment>
<comment type="subcellular location">
    <subcellularLocation>
        <location evidence="2">Cytoplasm</location>
        <location evidence="2">Cytosol</location>
    </subcellularLocation>
</comment>
<protein>
    <recommendedName>
        <fullName>NHL repeat-containing protein 2</fullName>
    </recommendedName>
</protein>